<feature type="chain" id="PRO_0000341030" description="Ribosome-recycling factor">
    <location>
        <begin position="1"/>
        <end position="187"/>
    </location>
</feature>
<reference key="1">
    <citation type="submission" date="2007-11" db="EMBL/GenBank/DDBJ databases">
        <title>Complete sequence of Petroga mobilis SJ95.</title>
        <authorList>
            <consortium name="US DOE Joint Genome Institute"/>
            <person name="Copeland A."/>
            <person name="Lucas S."/>
            <person name="Lapidus A."/>
            <person name="Barry K."/>
            <person name="Glavina del Rio T."/>
            <person name="Dalin E."/>
            <person name="Tice H."/>
            <person name="Pitluck S."/>
            <person name="Meincke L."/>
            <person name="Brettin T."/>
            <person name="Bruce D."/>
            <person name="Detter J.C."/>
            <person name="Han C."/>
            <person name="Kuske C.R."/>
            <person name="Schmutz J."/>
            <person name="Larimer F."/>
            <person name="Land M."/>
            <person name="Hauser L."/>
            <person name="Kyrpides N."/>
            <person name="Mikhailova N."/>
            <person name="Noll K."/>
            <person name="Richardson P."/>
        </authorList>
    </citation>
    <scope>NUCLEOTIDE SEQUENCE [LARGE SCALE GENOMIC DNA]</scope>
    <source>
        <strain>DSM 10674 / SJ95</strain>
    </source>
</reference>
<accession>A9BJD6</accession>
<gene>
    <name evidence="1" type="primary">frr</name>
    <name type="ordered locus">Pmob_0616</name>
</gene>
<organism>
    <name type="scientific">Petrotoga mobilis (strain DSM 10674 / SJ95)</name>
    <dbReference type="NCBI Taxonomy" id="403833"/>
    <lineage>
        <taxon>Bacteria</taxon>
        <taxon>Thermotogati</taxon>
        <taxon>Thermotogota</taxon>
        <taxon>Thermotogae</taxon>
        <taxon>Petrotogales</taxon>
        <taxon>Petrotogaceae</taxon>
        <taxon>Petrotoga</taxon>
    </lineage>
</organism>
<evidence type="ECO:0000255" key="1">
    <source>
        <dbReference type="HAMAP-Rule" id="MF_00040"/>
    </source>
</evidence>
<proteinExistence type="inferred from homology"/>
<dbReference type="EMBL" id="CP000879">
    <property type="protein sequence ID" value="ABX31350.1"/>
    <property type="molecule type" value="Genomic_DNA"/>
</dbReference>
<dbReference type="RefSeq" id="WP_012208454.1">
    <property type="nucleotide sequence ID" value="NC_010003.1"/>
</dbReference>
<dbReference type="SMR" id="A9BJD6"/>
<dbReference type="STRING" id="403833.Pmob_0616"/>
<dbReference type="KEGG" id="pmo:Pmob_0616"/>
<dbReference type="eggNOG" id="COG0233">
    <property type="taxonomic scope" value="Bacteria"/>
</dbReference>
<dbReference type="HOGENOM" id="CLU_073981_2_0_0"/>
<dbReference type="OrthoDB" id="9804006at2"/>
<dbReference type="Proteomes" id="UP000000789">
    <property type="component" value="Chromosome"/>
</dbReference>
<dbReference type="GO" id="GO:0005737">
    <property type="term" value="C:cytoplasm"/>
    <property type="evidence" value="ECO:0007669"/>
    <property type="project" value="UniProtKB-SubCell"/>
</dbReference>
<dbReference type="GO" id="GO:0043023">
    <property type="term" value="F:ribosomal large subunit binding"/>
    <property type="evidence" value="ECO:0007669"/>
    <property type="project" value="TreeGrafter"/>
</dbReference>
<dbReference type="GO" id="GO:0006415">
    <property type="term" value="P:translational termination"/>
    <property type="evidence" value="ECO:0007669"/>
    <property type="project" value="UniProtKB-UniRule"/>
</dbReference>
<dbReference type="CDD" id="cd00520">
    <property type="entry name" value="RRF"/>
    <property type="match status" value="1"/>
</dbReference>
<dbReference type="FunFam" id="3.30.1360.40:FF:000001">
    <property type="entry name" value="Ribosome-recycling factor"/>
    <property type="match status" value="1"/>
</dbReference>
<dbReference type="Gene3D" id="3.30.1360.40">
    <property type="match status" value="1"/>
</dbReference>
<dbReference type="Gene3D" id="1.10.132.20">
    <property type="entry name" value="Ribosome-recycling factor"/>
    <property type="match status" value="1"/>
</dbReference>
<dbReference type="HAMAP" id="MF_00040">
    <property type="entry name" value="RRF"/>
    <property type="match status" value="1"/>
</dbReference>
<dbReference type="InterPro" id="IPR002661">
    <property type="entry name" value="Ribosome_recyc_fac"/>
</dbReference>
<dbReference type="InterPro" id="IPR023584">
    <property type="entry name" value="Ribosome_recyc_fac_dom"/>
</dbReference>
<dbReference type="InterPro" id="IPR036191">
    <property type="entry name" value="RRF_sf"/>
</dbReference>
<dbReference type="NCBIfam" id="TIGR00496">
    <property type="entry name" value="frr"/>
    <property type="match status" value="1"/>
</dbReference>
<dbReference type="PANTHER" id="PTHR20982:SF3">
    <property type="entry name" value="MITOCHONDRIAL RIBOSOME RECYCLING FACTOR PSEUDO 1"/>
    <property type="match status" value="1"/>
</dbReference>
<dbReference type="PANTHER" id="PTHR20982">
    <property type="entry name" value="RIBOSOME RECYCLING FACTOR"/>
    <property type="match status" value="1"/>
</dbReference>
<dbReference type="Pfam" id="PF01765">
    <property type="entry name" value="RRF"/>
    <property type="match status" value="1"/>
</dbReference>
<dbReference type="SUPFAM" id="SSF55194">
    <property type="entry name" value="Ribosome recycling factor, RRF"/>
    <property type="match status" value="1"/>
</dbReference>
<comment type="function">
    <text evidence="1">Responsible for the release of ribosomes from messenger RNA at the termination of protein biosynthesis. May increase the efficiency of translation by recycling ribosomes from one round of translation to another.</text>
</comment>
<comment type="subcellular location">
    <subcellularLocation>
        <location evidence="1">Cytoplasm</location>
    </subcellularLocation>
</comment>
<comment type="similarity">
    <text evidence="1">Belongs to the RRF family.</text>
</comment>
<protein>
    <recommendedName>
        <fullName evidence="1">Ribosome-recycling factor</fullName>
        <shortName evidence="1">RRF</shortName>
    </recommendedName>
    <alternativeName>
        <fullName evidence="1">Ribosome-releasing factor</fullName>
    </alternativeName>
</protein>
<keyword id="KW-0963">Cytoplasm</keyword>
<keyword id="KW-0648">Protein biosynthesis</keyword>
<name>RRF_PETMO</name>
<sequence>MAKRSSYAKEAEEKMKKTLEHFEDELKKVRTGRPTTAIFEDIKVDYYGMPTPINQVATLSVGEERTVVITPWDKKMLEPIEKAINSSNFGFHAINDGNVVRVSFPNPTIEERRKLVKAIKEMLEETKVALRNIRRDDIKKVKEIKNEGSISEDEAKKFEEEIQEILKENEDEAEKIFQRKEKEIMES</sequence>